<dbReference type="EC" id="2.7.4.6" evidence="1"/>
<dbReference type="EMBL" id="CP000656">
    <property type="protein sequence ID" value="ABP45110.1"/>
    <property type="molecule type" value="Genomic_DNA"/>
</dbReference>
<dbReference type="SMR" id="A4T2J0"/>
<dbReference type="STRING" id="350054.Mflv_2633"/>
<dbReference type="KEGG" id="mgi:Mflv_2633"/>
<dbReference type="eggNOG" id="COG0105">
    <property type="taxonomic scope" value="Bacteria"/>
</dbReference>
<dbReference type="HOGENOM" id="CLU_060216_6_3_11"/>
<dbReference type="OrthoDB" id="9801161at2"/>
<dbReference type="GO" id="GO:0005737">
    <property type="term" value="C:cytoplasm"/>
    <property type="evidence" value="ECO:0007669"/>
    <property type="project" value="UniProtKB-SubCell"/>
</dbReference>
<dbReference type="GO" id="GO:0005524">
    <property type="term" value="F:ATP binding"/>
    <property type="evidence" value="ECO:0007669"/>
    <property type="project" value="UniProtKB-UniRule"/>
</dbReference>
<dbReference type="GO" id="GO:0046872">
    <property type="term" value="F:metal ion binding"/>
    <property type="evidence" value="ECO:0007669"/>
    <property type="project" value="UniProtKB-KW"/>
</dbReference>
<dbReference type="GO" id="GO:0004550">
    <property type="term" value="F:nucleoside diphosphate kinase activity"/>
    <property type="evidence" value="ECO:0007669"/>
    <property type="project" value="UniProtKB-UniRule"/>
</dbReference>
<dbReference type="GO" id="GO:0006241">
    <property type="term" value="P:CTP biosynthetic process"/>
    <property type="evidence" value="ECO:0007669"/>
    <property type="project" value="UniProtKB-UniRule"/>
</dbReference>
<dbReference type="GO" id="GO:0006183">
    <property type="term" value="P:GTP biosynthetic process"/>
    <property type="evidence" value="ECO:0007669"/>
    <property type="project" value="UniProtKB-UniRule"/>
</dbReference>
<dbReference type="GO" id="GO:0006228">
    <property type="term" value="P:UTP biosynthetic process"/>
    <property type="evidence" value="ECO:0007669"/>
    <property type="project" value="UniProtKB-UniRule"/>
</dbReference>
<dbReference type="CDD" id="cd04413">
    <property type="entry name" value="NDPk_I"/>
    <property type="match status" value="1"/>
</dbReference>
<dbReference type="FunFam" id="3.30.70.141:FF:000003">
    <property type="entry name" value="Nucleoside diphosphate kinase"/>
    <property type="match status" value="1"/>
</dbReference>
<dbReference type="Gene3D" id="3.30.70.141">
    <property type="entry name" value="Nucleoside diphosphate kinase-like domain"/>
    <property type="match status" value="1"/>
</dbReference>
<dbReference type="HAMAP" id="MF_00451">
    <property type="entry name" value="NDP_kinase"/>
    <property type="match status" value="1"/>
</dbReference>
<dbReference type="InterPro" id="IPR034907">
    <property type="entry name" value="NDK-like_dom"/>
</dbReference>
<dbReference type="InterPro" id="IPR036850">
    <property type="entry name" value="NDK-like_dom_sf"/>
</dbReference>
<dbReference type="InterPro" id="IPR001564">
    <property type="entry name" value="Nucleoside_diP_kinase"/>
</dbReference>
<dbReference type="InterPro" id="IPR023005">
    <property type="entry name" value="Nucleoside_diP_kinase_AS"/>
</dbReference>
<dbReference type="NCBIfam" id="NF001908">
    <property type="entry name" value="PRK00668.1"/>
    <property type="match status" value="1"/>
</dbReference>
<dbReference type="PANTHER" id="PTHR11349">
    <property type="entry name" value="NUCLEOSIDE DIPHOSPHATE KINASE"/>
    <property type="match status" value="1"/>
</dbReference>
<dbReference type="Pfam" id="PF00334">
    <property type="entry name" value="NDK"/>
    <property type="match status" value="1"/>
</dbReference>
<dbReference type="PRINTS" id="PR01243">
    <property type="entry name" value="NUCDPKINASE"/>
</dbReference>
<dbReference type="SMART" id="SM00562">
    <property type="entry name" value="NDK"/>
    <property type="match status" value="1"/>
</dbReference>
<dbReference type="SUPFAM" id="SSF54919">
    <property type="entry name" value="Nucleoside diphosphate kinase, NDK"/>
    <property type="match status" value="1"/>
</dbReference>
<dbReference type="PROSITE" id="PS00469">
    <property type="entry name" value="NDPK"/>
    <property type="match status" value="1"/>
</dbReference>
<dbReference type="PROSITE" id="PS51374">
    <property type="entry name" value="NDPK_LIKE"/>
    <property type="match status" value="1"/>
</dbReference>
<name>NDK_MYCGI</name>
<gene>
    <name evidence="1" type="primary">ndk</name>
    <name type="ordered locus">Mflv_2633</name>
</gene>
<feature type="chain" id="PRO_1000080969" description="Nucleoside diphosphate kinase">
    <location>
        <begin position="1"/>
        <end position="136"/>
    </location>
</feature>
<feature type="active site" description="Pros-phosphohistidine intermediate" evidence="1">
    <location>
        <position position="117"/>
    </location>
</feature>
<feature type="binding site" evidence="1">
    <location>
        <position position="10"/>
    </location>
    <ligand>
        <name>ATP</name>
        <dbReference type="ChEBI" id="CHEBI:30616"/>
    </ligand>
</feature>
<feature type="binding site" evidence="1">
    <location>
        <position position="58"/>
    </location>
    <ligand>
        <name>ATP</name>
        <dbReference type="ChEBI" id="CHEBI:30616"/>
    </ligand>
</feature>
<feature type="binding site" evidence="1">
    <location>
        <position position="86"/>
    </location>
    <ligand>
        <name>ATP</name>
        <dbReference type="ChEBI" id="CHEBI:30616"/>
    </ligand>
</feature>
<feature type="binding site" evidence="1">
    <location>
        <position position="92"/>
    </location>
    <ligand>
        <name>ATP</name>
        <dbReference type="ChEBI" id="CHEBI:30616"/>
    </ligand>
</feature>
<feature type="binding site" evidence="1">
    <location>
        <position position="104"/>
    </location>
    <ligand>
        <name>ATP</name>
        <dbReference type="ChEBI" id="CHEBI:30616"/>
    </ligand>
</feature>
<feature type="binding site" evidence="1">
    <location>
        <position position="114"/>
    </location>
    <ligand>
        <name>ATP</name>
        <dbReference type="ChEBI" id="CHEBI:30616"/>
    </ligand>
</feature>
<sequence>MTERTLVLIKPDGVQRRLIGEIISRIEAKGLAIVALELKNVGDDTARAHYAEHEGKPFFASLLEFITSGPVVAAVLEGPRAIAAFRQLAGGTDPVEKAIPGTIRGDLGLETQFNLVHGSDSPDSAAREIALWFPGL</sequence>
<accession>A4T2J0</accession>
<organism>
    <name type="scientific">Mycolicibacterium gilvum (strain PYR-GCK)</name>
    <name type="common">Mycobacterium gilvum (strain PYR-GCK)</name>
    <dbReference type="NCBI Taxonomy" id="350054"/>
    <lineage>
        <taxon>Bacteria</taxon>
        <taxon>Bacillati</taxon>
        <taxon>Actinomycetota</taxon>
        <taxon>Actinomycetes</taxon>
        <taxon>Mycobacteriales</taxon>
        <taxon>Mycobacteriaceae</taxon>
        <taxon>Mycolicibacterium</taxon>
    </lineage>
</organism>
<comment type="function">
    <text evidence="1">Major role in the synthesis of nucleoside triphosphates other than ATP. The ATP gamma phosphate is transferred to the NDP beta phosphate via a ping-pong mechanism, using a phosphorylated active-site intermediate.</text>
</comment>
<comment type="catalytic activity">
    <reaction evidence="1">
        <text>a 2'-deoxyribonucleoside 5'-diphosphate + ATP = a 2'-deoxyribonucleoside 5'-triphosphate + ADP</text>
        <dbReference type="Rhea" id="RHEA:44640"/>
        <dbReference type="ChEBI" id="CHEBI:30616"/>
        <dbReference type="ChEBI" id="CHEBI:61560"/>
        <dbReference type="ChEBI" id="CHEBI:73316"/>
        <dbReference type="ChEBI" id="CHEBI:456216"/>
        <dbReference type="EC" id="2.7.4.6"/>
    </reaction>
</comment>
<comment type="catalytic activity">
    <reaction evidence="1">
        <text>a ribonucleoside 5'-diphosphate + ATP = a ribonucleoside 5'-triphosphate + ADP</text>
        <dbReference type="Rhea" id="RHEA:18113"/>
        <dbReference type="ChEBI" id="CHEBI:30616"/>
        <dbReference type="ChEBI" id="CHEBI:57930"/>
        <dbReference type="ChEBI" id="CHEBI:61557"/>
        <dbReference type="ChEBI" id="CHEBI:456216"/>
        <dbReference type="EC" id="2.7.4.6"/>
    </reaction>
</comment>
<comment type="cofactor">
    <cofactor evidence="1">
        <name>Mg(2+)</name>
        <dbReference type="ChEBI" id="CHEBI:18420"/>
    </cofactor>
</comment>
<comment type="subunit">
    <text evidence="1">Homotetramer.</text>
</comment>
<comment type="subcellular location">
    <subcellularLocation>
        <location evidence="1">Cytoplasm</location>
    </subcellularLocation>
</comment>
<comment type="similarity">
    <text evidence="1">Belongs to the NDK family.</text>
</comment>
<proteinExistence type="inferred from homology"/>
<evidence type="ECO:0000255" key="1">
    <source>
        <dbReference type="HAMAP-Rule" id="MF_00451"/>
    </source>
</evidence>
<reference key="1">
    <citation type="submission" date="2007-04" db="EMBL/GenBank/DDBJ databases">
        <title>Complete sequence of chromosome of Mycobacterium gilvum PYR-GCK.</title>
        <authorList>
            <consortium name="US DOE Joint Genome Institute"/>
            <person name="Copeland A."/>
            <person name="Lucas S."/>
            <person name="Lapidus A."/>
            <person name="Barry K."/>
            <person name="Detter J.C."/>
            <person name="Glavina del Rio T."/>
            <person name="Hammon N."/>
            <person name="Israni S."/>
            <person name="Dalin E."/>
            <person name="Tice H."/>
            <person name="Pitluck S."/>
            <person name="Chain P."/>
            <person name="Malfatti S."/>
            <person name="Shin M."/>
            <person name="Vergez L."/>
            <person name="Schmutz J."/>
            <person name="Larimer F."/>
            <person name="Land M."/>
            <person name="Hauser L."/>
            <person name="Kyrpides N."/>
            <person name="Mikhailova N."/>
            <person name="Miller C."/>
            <person name="Richardson P."/>
        </authorList>
    </citation>
    <scope>NUCLEOTIDE SEQUENCE [LARGE SCALE GENOMIC DNA]</scope>
    <source>
        <strain>PYR-GCK</strain>
    </source>
</reference>
<protein>
    <recommendedName>
        <fullName evidence="1">Nucleoside diphosphate kinase</fullName>
        <shortName evidence="1">NDK</shortName>
        <shortName evidence="1">NDP kinase</shortName>
        <ecNumber evidence="1">2.7.4.6</ecNumber>
    </recommendedName>
    <alternativeName>
        <fullName evidence="1">Nucleoside-2-P kinase</fullName>
    </alternativeName>
</protein>
<keyword id="KW-0067">ATP-binding</keyword>
<keyword id="KW-0963">Cytoplasm</keyword>
<keyword id="KW-0418">Kinase</keyword>
<keyword id="KW-0460">Magnesium</keyword>
<keyword id="KW-0479">Metal-binding</keyword>
<keyword id="KW-0546">Nucleotide metabolism</keyword>
<keyword id="KW-0547">Nucleotide-binding</keyword>
<keyword id="KW-0597">Phosphoprotein</keyword>
<keyword id="KW-0808">Transferase</keyword>